<organism>
    <name type="scientific">Bifidobacterium longum (strain DJO10A)</name>
    <dbReference type="NCBI Taxonomy" id="205913"/>
    <lineage>
        <taxon>Bacteria</taxon>
        <taxon>Bacillati</taxon>
        <taxon>Actinomycetota</taxon>
        <taxon>Actinomycetes</taxon>
        <taxon>Bifidobacteriales</taxon>
        <taxon>Bifidobacteriaceae</taxon>
        <taxon>Bifidobacterium</taxon>
    </lineage>
</organism>
<dbReference type="EC" id="6.3.2.8" evidence="1"/>
<dbReference type="EMBL" id="CP000605">
    <property type="protein sequence ID" value="ACD97628.1"/>
    <property type="molecule type" value="Genomic_DNA"/>
</dbReference>
<dbReference type="RefSeq" id="WP_012471790.1">
    <property type="nucleotide sequence ID" value="NZ_AABM02000003.1"/>
</dbReference>
<dbReference type="SMR" id="B3DQN2"/>
<dbReference type="KEGG" id="blj:BLD_0182"/>
<dbReference type="HOGENOM" id="CLU_028104_2_1_11"/>
<dbReference type="UniPathway" id="UPA00219"/>
<dbReference type="Proteomes" id="UP000002419">
    <property type="component" value="Chromosome"/>
</dbReference>
<dbReference type="GO" id="GO:0005737">
    <property type="term" value="C:cytoplasm"/>
    <property type="evidence" value="ECO:0007669"/>
    <property type="project" value="UniProtKB-SubCell"/>
</dbReference>
<dbReference type="GO" id="GO:0005524">
    <property type="term" value="F:ATP binding"/>
    <property type="evidence" value="ECO:0007669"/>
    <property type="project" value="UniProtKB-UniRule"/>
</dbReference>
<dbReference type="GO" id="GO:0008763">
    <property type="term" value="F:UDP-N-acetylmuramate-L-alanine ligase activity"/>
    <property type="evidence" value="ECO:0007669"/>
    <property type="project" value="UniProtKB-UniRule"/>
</dbReference>
<dbReference type="GO" id="GO:0051301">
    <property type="term" value="P:cell division"/>
    <property type="evidence" value="ECO:0007669"/>
    <property type="project" value="UniProtKB-KW"/>
</dbReference>
<dbReference type="GO" id="GO:0071555">
    <property type="term" value="P:cell wall organization"/>
    <property type="evidence" value="ECO:0007669"/>
    <property type="project" value="UniProtKB-KW"/>
</dbReference>
<dbReference type="GO" id="GO:0009252">
    <property type="term" value="P:peptidoglycan biosynthetic process"/>
    <property type="evidence" value="ECO:0007669"/>
    <property type="project" value="UniProtKB-UniRule"/>
</dbReference>
<dbReference type="GO" id="GO:0008360">
    <property type="term" value="P:regulation of cell shape"/>
    <property type="evidence" value="ECO:0007669"/>
    <property type="project" value="UniProtKB-KW"/>
</dbReference>
<dbReference type="Gene3D" id="3.90.190.20">
    <property type="entry name" value="Mur ligase, C-terminal domain"/>
    <property type="match status" value="1"/>
</dbReference>
<dbReference type="Gene3D" id="3.40.1190.10">
    <property type="entry name" value="Mur-like, catalytic domain"/>
    <property type="match status" value="1"/>
</dbReference>
<dbReference type="Gene3D" id="3.40.50.720">
    <property type="entry name" value="NAD(P)-binding Rossmann-like Domain"/>
    <property type="match status" value="1"/>
</dbReference>
<dbReference type="HAMAP" id="MF_00046">
    <property type="entry name" value="MurC"/>
    <property type="match status" value="1"/>
</dbReference>
<dbReference type="InterPro" id="IPR036565">
    <property type="entry name" value="Mur-like_cat_sf"/>
</dbReference>
<dbReference type="InterPro" id="IPR004101">
    <property type="entry name" value="Mur_ligase_C"/>
</dbReference>
<dbReference type="InterPro" id="IPR036615">
    <property type="entry name" value="Mur_ligase_C_dom_sf"/>
</dbReference>
<dbReference type="InterPro" id="IPR013221">
    <property type="entry name" value="Mur_ligase_cen"/>
</dbReference>
<dbReference type="InterPro" id="IPR000713">
    <property type="entry name" value="Mur_ligase_N"/>
</dbReference>
<dbReference type="InterPro" id="IPR050061">
    <property type="entry name" value="MurCDEF_pg_biosynth"/>
</dbReference>
<dbReference type="InterPro" id="IPR005758">
    <property type="entry name" value="UDP-N-AcMur_Ala_ligase_MurC"/>
</dbReference>
<dbReference type="NCBIfam" id="TIGR01082">
    <property type="entry name" value="murC"/>
    <property type="match status" value="1"/>
</dbReference>
<dbReference type="PANTHER" id="PTHR43445:SF3">
    <property type="entry name" value="UDP-N-ACETYLMURAMATE--L-ALANINE LIGASE"/>
    <property type="match status" value="1"/>
</dbReference>
<dbReference type="PANTHER" id="PTHR43445">
    <property type="entry name" value="UDP-N-ACETYLMURAMATE--L-ALANINE LIGASE-RELATED"/>
    <property type="match status" value="1"/>
</dbReference>
<dbReference type="Pfam" id="PF01225">
    <property type="entry name" value="Mur_ligase"/>
    <property type="match status" value="1"/>
</dbReference>
<dbReference type="Pfam" id="PF02875">
    <property type="entry name" value="Mur_ligase_C"/>
    <property type="match status" value="1"/>
</dbReference>
<dbReference type="Pfam" id="PF08245">
    <property type="entry name" value="Mur_ligase_M"/>
    <property type="match status" value="1"/>
</dbReference>
<dbReference type="SUPFAM" id="SSF51984">
    <property type="entry name" value="MurCD N-terminal domain"/>
    <property type="match status" value="1"/>
</dbReference>
<dbReference type="SUPFAM" id="SSF53623">
    <property type="entry name" value="MurD-like peptide ligases, catalytic domain"/>
    <property type="match status" value="1"/>
</dbReference>
<dbReference type="SUPFAM" id="SSF53244">
    <property type="entry name" value="MurD-like peptide ligases, peptide-binding domain"/>
    <property type="match status" value="1"/>
</dbReference>
<keyword id="KW-0067">ATP-binding</keyword>
<keyword id="KW-0131">Cell cycle</keyword>
<keyword id="KW-0132">Cell division</keyword>
<keyword id="KW-0133">Cell shape</keyword>
<keyword id="KW-0961">Cell wall biogenesis/degradation</keyword>
<keyword id="KW-0963">Cytoplasm</keyword>
<keyword id="KW-0436">Ligase</keyword>
<keyword id="KW-0547">Nucleotide-binding</keyword>
<keyword id="KW-0573">Peptidoglycan synthesis</keyword>
<sequence>MSQDQPIVLDPTYASFDAAARPADLGATHFIGIGGAGMSVLAEMLHAEGVAVDGSDRAHSAKTDRLETLGITVEFGQRAENVAQAETVVYSSAIKPDNPEIVAAHAAGKRIVHRSDILALLMNGKRAVTVAGAHGKTTTSSMLSHILVNAGADPSYAIGGFIQGPDGTTLDGGHAGKGDILVAEADESDGSFAKYHPTIAIITNCEADHLDHYGDEAHYRAAFVAHAGRATGHVIISIDDPDGLAVLEALPADVKSHTVAYGTTARESLPDLGGAAYVWIASESETAGSGVEQLTLHLPAAVTAGEPVSQSVALKVPGVHNARNAAAAISAAVLLGVSPADAANAAGTFLGAARRFQVRGTVKQVTVVDDYAHHPTEIAALLDAARRRYPDSTIRVIFQPHLFSRTKFFAHQFAKSLAKADDVIITGIFPAREKQADFPDISPSTIVDAAAGLKDASAGTWIQPVEDMCLAAKMMAMRAHHGDVIFTVGAGDITDMDQVLLTALEAHRESCE</sequence>
<comment type="function">
    <text evidence="1">Cell wall formation.</text>
</comment>
<comment type="catalytic activity">
    <reaction evidence="1">
        <text>UDP-N-acetyl-alpha-D-muramate + L-alanine + ATP = UDP-N-acetyl-alpha-D-muramoyl-L-alanine + ADP + phosphate + H(+)</text>
        <dbReference type="Rhea" id="RHEA:23372"/>
        <dbReference type="ChEBI" id="CHEBI:15378"/>
        <dbReference type="ChEBI" id="CHEBI:30616"/>
        <dbReference type="ChEBI" id="CHEBI:43474"/>
        <dbReference type="ChEBI" id="CHEBI:57972"/>
        <dbReference type="ChEBI" id="CHEBI:70757"/>
        <dbReference type="ChEBI" id="CHEBI:83898"/>
        <dbReference type="ChEBI" id="CHEBI:456216"/>
        <dbReference type="EC" id="6.3.2.8"/>
    </reaction>
</comment>
<comment type="pathway">
    <text evidence="1">Cell wall biogenesis; peptidoglycan biosynthesis.</text>
</comment>
<comment type="subcellular location">
    <subcellularLocation>
        <location evidence="1">Cytoplasm</location>
    </subcellularLocation>
</comment>
<comment type="similarity">
    <text evidence="1">Belongs to the MurCDEF family.</text>
</comment>
<feature type="chain" id="PRO_1000091079" description="UDP-N-acetylmuramate--L-alanine ligase">
    <location>
        <begin position="1"/>
        <end position="512"/>
    </location>
</feature>
<feature type="binding site" evidence="1">
    <location>
        <begin position="132"/>
        <end position="138"/>
    </location>
    <ligand>
        <name>ATP</name>
        <dbReference type="ChEBI" id="CHEBI:30616"/>
    </ligand>
</feature>
<accession>B3DQN2</accession>
<protein>
    <recommendedName>
        <fullName evidence="1">UDP-N-acetylmuramate--L-alanine ligase</fullName>
        <ecNumber evidence="1">6.3.2.8</ecNumber>
    </recommendedName>
    <alternativeName>
        <fullName evidence="1">UDP-N-acetylmuramoyl-L-alanine synthetase</fullName>
    </alternativeName>
</protein>
<reference key="1">
    <citation type="journal article" date="2008" name="BMC Genomics">
        <title>Comparative genomic analysis of the gut bacterium Bifidobacterium longum reveals loci susceptible to deletion during pure culture growth.</title>
        <authorList>
            <person name="Lee J.H."/>
            <person name="Karamychev V.N."/>
            <person name="Kozyavkin S.A."/>
            <person name="Mills D."/>
            <person name="Pavlov A.R."/>
            <person name="Pavlova N.V."/>
            <person name="Polouchine N.N."/>
            <person name="Richardson P.M."/>
            <person name="Shakhova V.V."/>
            <person name="Slesarev A.I."/>
            <person name="Weimer B."/>
            <person name="O'Sullivan D.J."/>
        </authorList>
    </citation>
    <scope>NUCLEOTIDE SEQUENCE [LARGE SCALE GENOMIC DNA]</scope>
    <source>
        <strain>DJO10A</strain>
    </source>
</reference>
<name>MURC_BIFLD</name>
<proteinExistence type="inferred from homology"/>
<evidence type="ECO:0000255" key="1">
    <source>
        <dbReference type="HAMAP-Rule" id="MF_00046"/>
    </source>
</evidence>
<gene>
    <name evidence="1" type="primary">murC</name>
    <name type="ordered locus">BLD_0182</name>
</gene>